<keyword id="KW-0007">Acetylation</keyword>
<keyword id="KW-0965">Cell junction</keyword>
<keyword id="KW-0963">Cytoplasm</keyword>
<keyword id="KW-0378">Hydrolase</keyword>
<keyword id="KW-0464">Manganese</keyword>
<keyword id="KW-0479">Metal-binding</keyword>
<keyword id="KW-0539">Nucleus</keyword>
<keyword id="KW-0597">Phosphoprotein</keyword>
<keyword id="KW-1185">Reference proteome</keyword>
<comment type="function">
    <text evidence="2">Phosphodiesterase (PDE) that has higher activity toward cAMP than cGMP, as substrate. Plays a role in cell proliferation, migration and differentiation, and acts as a negative regulator of NME1. Plays a role in the regulation of neurogenesis. Involved in the regulation of microtubule polymerization.</text>
</comment>
<comment type="catalytic activity">
    <reaction>
        <text>diphosphate + H2O = 2 phosphate + H(+)</text>
        <dbReference type="Rhea" id="RHEA:24576"/>
        <dbReference type="ChEBI" id="CHEBI:15377"/>
        <dbReference type="ChEBI" id="CHEBI:15378"/>
        <dbReference type="ChEBI" id="CHEBI:33019"/>
        <dbReference type="ChEBI" id="CHEBI:43474"/>
        <dbReference type="EC" id="3.6.1.1"/>
    </reaction>
</comment>
<comment type="cofactor">
    <cofactor evidence="1">
        <name>Mn(2+)</name>
        <dbReference type="ChEBI" id="CHEBI:29035"/>
    </cofactor>
    <text evidence="1">Binds 2 manganese ions per subunit.</text>
</comment>
<comment type="activity regulation">
    <text evidence="1">Activated by magnesium ions and inhibited by manganese ions. Inhibited by dipyridamole, moderately sensitive to IBMX and inhibited by vinpocetine (By similarity).</text>
</comment>
<comment type="subunit">
    <text evidence="2">Homooligomer. Able to homodimerize via its C-terminal domain. Interacts with NME1. Interacts with GSK3; at focal adhesion complexes where paxillin and vinculin are colocalized. Interacts with alpha and beta tubulin.</text>
</comment>
<comment type="subcellular location">
    <subcellularLocation>
        <location evidence="1">Cytoplasm</location>
    </subcellularLocation>
    <subcellularLocation>
        <location evidence="1">Nucleus</location>
    </subcellularLocation>
    <subcellularLocation>
        <location evidence="1">Cell junction</location>
        <location evidence="1">Focal adhesion</location>
    </subcellularLocation>
</comment>
<comment type="similarity">
    <text evidence="5">Belongs to the PPase class C family. Prune subfamily.</text>
</comment>
<protein>
    <recommendedName>
        <fullName>Exopolyphosphatase PRUNE1</fullName>
        <ecNumber>3.6.1.1</ecNumber>
    </recommendedName>
</protein>
<evidence type="ECO:0000250" key="1"/>
<evidence type="ECO:0000250" key="2">
    <source>
        <dbReference type="UniProtKB" id="Q86TP1"/>
    </source>
</evidence>
<evidence type="ECO:0000250" key="3">
    <source>
        <dbReference type="UniProtKB" id="Q8BIW1"/>
    </source>
</evidence>
<evidence type="ECO:0000256" key="4">
    <source>
        <dbReference type="SAM" id="MobiDB-lite"/>
    </source>
</evidence>
<evidence type="ECO:0000305" key="5"/>
<evidence type="ECO:0007744" key="6">
    <source>
    </source>
</evidence>
<proteinExistence type="evidence at protein level"/>
<reference key="1">
    <citation type="journal article" date="2004" name="Genome Res.">
        <title>The status, quality, and expansion of the NIH full-length cDNA project: the Mammalian Gene Collection (MGC).</title>
        <authorList>
            <consortium name="The MGC Project Team"/>
        </authorList>
    </citation>
    <scope>NUCLEOTIDE SEQUENCE [LARGE SCALE MRNA]</scope>
    <source>
        <tissue>Testis</tissue>
    </source>
</reference>
<reference key="2">
    <citation type="journal article" date="2012" name="Nat. Commun.">
        <title>Quantitative maps of protein phosphorylation sites across 14 different rat organs and tissues.</title>
        <authorList>
            <person name="Lundby A."/>
            <person name="Secher A."/>
            <person name="Lage K."/>
            <person name="Nordsborg N.B."/>
            <person name="Dmytriyev A."/>
            <person name="Lundby C."/>
            <person name="Olsen J.V."/>
        </authorList>
    </citation>
    <scope>PHOSPHORYLATION [LARGE SCALE ANALYSIS] AT SER-400</scope>
    <scope>IDENTIFICATION BY MASS SPECTROMETRY [LARGE SCALE ANALYSIS]</scope>
</reference>
<gene>
    <name type="primary">Prune1</name>
    <name type="synonym">Prune</name>
</gene>
<feature type="chain" id="PRO_0000337989" description="Exopolyphosphatase PRUNE1">
    <location>
        <begin position="1"/>
        <end position="454"/>
    </location>
</feature>
<feature type="region of interest" description="Essential for homodimerization" evidence="1">
    <location>
        <begin position="394"/>
        <end position="421"/>
    </location>
</feature>
<feature type="region of interest" description="Disordered" evidence="4">
    <location>
        <begin position="398"/>
        <end position="421"/>
    </location>
</feature>
<feature type="short sequence motif" description="DHH motif" evidence="1">
    <location>
        <begin position="106"/>
        <end position="108"/>
    </location>
</feature>
<feature type="binding site" evidence="1">
    <location>
        <position position="28"/>
    </location>
    <ligand>
        <name>Mn(2+)</name>
        <dbReference type="ChEBI" id="CHEBI:29035"/>
        <label>1</label>
    </ligand>
</feature>
<feature type="binding site" evidence="1">
    <location>
        <position position="30"/>
    </location>
    <ligand>
        <name>Mn(2+)</name>
        <dbReference type="ChEBI" id="CHEBI:29035"/>
        <label>2</label>
    </ligand>
</feature>
<feature type="binding site" evidence="1">
    <location>
        <position position="106"/>
    </location>
    <ligand>
        <name>Mn(2+)</name>
        <dbReference type="ChEBI" id="CHEBI:29035"/>
        <label>1</label>
    </ligand>
</feature>
<feature type="binding site" evidence="1">
    <location>
        <position position="106"/>
    </location>
    <ligand>
        <name>Mn(2+)</name>
        <dbReference type="ChEBI" id="CHEBI:29035"/>
        <label>2</label>
    </ligand>
</feature>
<feature type="binding site" evidence="1">
    <location>
        <position position="179"/>
    </location>
    <ligand>
        <name>Mn(2+)</name>
        <dbReference type="ChEBI" id="CHEBI:29035"/>
        <label>2</label>
    </ligand>
</feature>
<feature type="modified residue" description="N-acetylmethionine" evidence="2">
    <location>
        <position position="1"/>
    </location>
</feature>
<feature type="modified residue" description="Phosphoserine" evidence="6">
    <location>
        <position position="400"/>
    </location>
</feature>
<feature type="modified residue" description="Phosphothreonine" evidence="3">
    <location>
        <position position="411"/>
    </location>
</feature>
<feature type="modified residue" description="Phosphoserine" evidence="3">
    <location>
        <position position="415"/>
    </location>
</feature>
<dbReference type="EC" id="3.6.1.1"/>
<dbReference type="EMBL" id="BC079054">
    <property type="protein sequence ID" value="AAH79054.1"/>
    <property type="molecule type" value="mRNA"/>
</dbReference>
<dbReference type="RefSeq" id="NP_001007698.1">
    <property type="nucleotide sequence ID" value="NM_001007697.1"/>
</dbReference>
<dbReference type="SMR" id="Q6AYG3"/>
<dbReference type="FunCoup" id="Q6AYG3">
    <property type="interactions" value="1068"/>
</dbReference>
<dbReference type="STRING" id="10116.ENSRNOP00000028677"/>
<dbReference type="GlyGen" id="Q6AYG3">
    <property type="glycosylation" value="1 site"/>
</dbReference>
<dbReference type="iPTMnet" id="Q6AYG3"/>
<dbReference type="PhosphoSitePlus" id="Q6AYG3"/>
<dbReference type="jPOST" id="Q6AYG3"/>
<dbReference type="PaxDb" id="10116-ENSRNOP00000028677"/>
<dbReference type="Ensembl" id="ENSRNOT00000028677.6">
    <property type="protein sequence ID" value="ENSRNOP00000028677.4"/>
    <property type="gene ID" value="ENSRNOG00000021120.6"/>
</dbReference>
<dbReference type="GeneID" id="310664"/>
<dbReference type="KEGG" id="rno:310664"/>
<dbReference type="UCSC" id="RGD:1359521">
    <property type="organism name" value="rat"/>
</dbReference>
<dbReference type="AGR" id="RGD:1359521"/>
<dbReference type="CTD" id="58497"/>
<dbReference type="RGD" id="1359521">
    <property type="gene designation" value="Prune1"/>
</dbReference>
<dbReference type="eggNOG" id="KOG4129">
    <property type="taxonomic scope" value="Eukaryota"/>
</dbReference>
<dbReference type="GeneTree" id="ENSGT00450000040262"/>
<dbReference type="HOGENOM" id="CLU_019358_2_0_1"/>
<dbReference type="InParanoid" id="Q6AYG3"/>
<dbReference type="OMA" id="TMTIFFN"/>
<dbReference type="OrthoDB" id="374045at2759"/>
<dbReference type="PhylomeDB" id="Q6AYG3"/>
<dbReference type="TreeFam" id="TF323914"/>
<dbReference type="PRO" id="PR:Q6AYG3"/>
<dbReference type="Proteomes" id="UP000002494">
    <property type="component" value="Chromosome 2"/>
</dbReference>
<dbReference type="Bgee" id="ENSRNOG00000021120">
    <property type="expression patterns" value="Expressed in skeletal muscle tissue and 20 other cell types or tissues"/>
</dbReference>
<dbReference type="GO" id="GO:0005737">
    <property type="term" value="C:cytoplasm"/>
    <property type="evidence" value="ECO:0000318"/>
    <property type="project" value="GO_Central"/>
</dbReference>
<dbReference type="GO" id="GO:0005829">
    <property type="term" value="C:cytosol"/>
    <property type="evidence" value="ECO:0007669"/>
    <property type="project" value="Ensembl"/>
</dbReference>
<dbReference type="GO" id="GO:0005925">
    <property type="term" value="C:focal adhesion"/>
    <property type="evidence" value="ECO:0007669"/>
    <property type="project" value="UniProtKB-SubCell"/>
</dbReference>
<dbReference type="GO" id="GO:0005634">
    <property type="term" value="C:nucleus"/>
    <property type="evidence" value="ECO:0007669"/>
    <property type="project" value="UniProtKB-SubCell"/>
</dbReference>
<dbReference type="GO" id="GO:0004309">
    <property type="term" value="F:exopolyphosphatase activity"/>
    <property type="evidence" value="ECO:0000318"/>
    <property type="project" value="GO_Central"/>
</dbReference>
<dbReference type="GO" id="GO:0004427">
    <property type="term" value="F:inorganic diphosphate phosphatase activity"/>
    <property type="evidence" value="ECO:0007669"/>
    <property type="project" value="UniProtKB-EC"/>
</dbReference>
<dbReference type="GO" id="GO:0046872">
    <property type="term" value="F:metal ion binding"/>
    <property type="evidence" value="ECO:0007669"/>
    <property type="project" value="UniProtKB-KW"/>
</dbReference>
<dbReference type="GO" id="GO:0016791">
    <property type="term" value="F:phosphatase activity"/>
    <property type="evidence" value="ECO:0000266"/>
    <property type="project" value="RGD"/>
</dbReference>
<dbReference type="GO" id="GO:0015631">
    <property type="term" value="F:tubulin binding"/>
    <property type="evidence" value="ECO:0000266"/>
    <property type="project" value="RGD"/>
</dbReference>
<dbReference type="GO" id="GO:0031113">
    <property type="term" value="P:regulation of microtubule polymerization"/>
    <property type="evidence" value="ECO:0000266"/>
    <property type="project" value="RGD"/>
</dbReference>
<dbReference type="GO" id="GO:0050767">
    <property type="term" value="P:regulation of neurogenesis"/>
    <property type="evidence" value="ECO:0000266"/>
    <property type="project" value="RGD"/>
</dbReference>
<dbReference type="FunFam" id="3.10.310.20:FF:000003">
    <property type="entry name" value="Prune exopolyphosphatase 1"/>
    <property type="match status" value="1"/>
</dbReference>
<dbReference type="FunFam" id="3.90.1640.10:FF:000004">
    <property type="entry name" value="Prune exopolyphosphatase 1"/>
    <property type="match status" value="1"/>
</dbReference>
<dbReference type="Gene3D" id="3.10.310.20">
    <property type="entry name" value="DHHA2 domain"/>
    <property type="match status" value="1"/>
</dbReference>
<dbReference type="Gene3D" id="3.90.1640.10">
    <property type="entry name" value="inorganic pyrophosphatase (n-terminal core)"/>
    <property type="match status" value="1"/>
</dbReference>
<dbReference type="InterPro" id="IPR001667">
    <property type="entry name" value="DDH_dom"/>
</dbReference>
<dbReference type="InterPro" id="IPR038763">
    <property type="entry name" value="DHH_sf"/>
</dbReference>
<dbReference type="InterPro" id="IPR004097">
    <property type="entry name" value="DHHA2"/>
</dbReference>
<dbReference type="InterPro" id="IPR038222">
    <property type="entry name" value="DHHA2_dom_sf"/>
</dbReference>
<dbReference type="PANTHER" id="PTHR12112">
    <property type="entry name" value="BNIP - RELATED"/>
    <property type="match status" value="1"/>
</dbReference>
<dbReference type="PANTHER" id="PTHR12112:SF47">
    <property type="entry name" value="EXOPOLYPHOSPHATASE PRUNE1"/>
    <property type="match status" value="1"/>
</dbReference>
<dbReference type="Pfam" id="PF01368">
    <property type="entry name" value="DHH"/>
    <property type="match status" value="1"/>
</dbReference>
<dbReference type="Pfam" id="PF02833">
    <property type="entry name" value="DHHA2"/>
    <property type="match status" value="1"/>
</dbReference>
<dbReference type="SMART" id="SM01131">
    <property type="entry name" value="DHHA2"/>
    <property type="match status" value="1"/>
</dbReference>
<dbReference type="SUPFAM" id="SSF64182">
    <property type="entry name" value="DHH phosphoesterases"/>
    <property type="match status" value="1"/>
</dbReference>
<accession>Q6AYG3</accession>
<organism>
    <name type="scientific">Rattus norvegicus</name>
    <name type="common">Rat</name>
    <dbReference type="NCBI Taxonomy" id="10116"/>
    <lineage>
        <taxon>Eukaryota</taxon>
        <taxon>Metazoa</taxon>
        <taxon>Chordata</taxon>
        <taxon>Craniata</taxon>
        <taxon>Vertebrata</taxon>
        <taxon>Euteleostomi</taxon>
        <taxon>Mammalia</taxon>
        <taxon>Eutheria</taxon>
        <taxon>Euarchontoglires</taxon>
        <taxon>Glires</taxon>
        <taxon>Rodentia</taxon>
        <taxon>Myomorpha</taxon>
        <taxon>Muroidea</taxon>
        <taxon>Muridae</taxon>
        <taxon>Murinae</taxon>
        <taxon>Rattus</taxon>
    </lineage>
</organism>
<name>PRUN1_RAT</name>
<sequence length="454" mass="49998">MEDYLQDCRAALQESRPLHVVLGNEACDLDSMVSALALAFYLTKTSEAEDIFIPVLNIKRSELPLRGDNVFFLQEVKIAESALIFRDEIDLLALHQAGQLTLILVDHHMLPKSDAALEEAVAEVLDHRPIEQKYCPPCHVSVELVGSCATLVAERILQGAPETLDRQTAALLHGTIILDCVNMDAKIGKATLKDNEYVEKLEALFPDLPKRKDIFDSLQKAKFDVSGLTTEQMLRKDQKTIYRQGTKVAVSAVYMDLEAFLQRSGLLSDLSAFCQDHSYDALVAMAIFFNTHNEPVRQLAIFCPHEALRMTICGVLEQSTSPALKLTPIPSISAHLQAYLQGNTQVSRKKLLPVLQEALSAYLDSMRTPAGQLEAALGMSREQADKELDKASNSLIAGLSQDDEDPPLPPTPMNSLVDECPLDQGLPKLSAEAVFEKCSQISLSQSTRACPSNK</sequence>